<keyword id="KW-0131">Cell cycle</keyword>
<keyword id="KW-0132">Cell division</keyword>
<keyword id="KW-0997">Cell inner membrane</keyword>
<keyword id="KW-1003">Cell membrane</keyword>
<keyword id="KW-0133">Cell shape</keyword>
<keyword id="KW-0961">Cell wall biogenesis/degradation</keyword>
<keyword id="KW-0328">Glycosyltransferase</keyword>
<keyword id="KW-0472">Membrane</keyword>
<keyword id="KW-0573">Peptidoglycan synthesis</keyword>
<keyword id="KW-1185">Reference proteome</keyword>
<keyword id="KW-0808">Transferase</keyword>
<organism>
    <name type="scientific">Maricaulis maris (strain MCS10)</name>
    <name type="common">Caulobacter maris</name>
    <dbReference type="NCBI Taxonomy" id="394221"/>
    <lineage>
        <taxon>Bacteria</taxon>
        <taxon>Pseudomonadati</taxon>
        <taxon>Pseudomonadota</taxon>
        <taxon>Alphaproteobacteria</taxon>
        <taxon>Maricaulales</taxon>
        <taxon>Maricaulaceae</taxon>
        <taxon>Maricaulis</taxon>
    </lineage>
</organism>
<name>MURG_MARMM</name>
<dbReference type="EC" id="2.4.1.227" evidence="1"/>
<dbReference type="EMBL" id="CP000449">
    <property type="protein sequence ID" value="ABI66370.1"/>
    <property type="molecule type" value="Genomic_DNA"/>
</dbReference>
<dbReference type="RefSeq" id="WP_011644015.1">
    <property type="nucleotide sequence ID" value="NC_008347.1"/>
</dbReference>
<dbReference type="SMR" id="Q0AMW7"/>
<dbReference type="STRING" id="394221.Mmar10_2078"/>
<dbReference type="CAZy" id="GT28">
    <property type="family name" value="Glycosyltransferase Family 28"/>
</dbReference>
<dbReference type="KEGG" id="mmr:Mmar10_2078"/>
<dbReference type="eggNOG" id="COG0707">
    <property type="taxonomic scope" value="Bacteria"/>
</dbReference>
<dbReference type="HOGENOM" id="CLU_037404_2_1_5"/>
<dbReference type="OrthoDB" id="9808936at2"/>
<dbReference type="UniPathway" id="UPA00219"/>
<dbReference type="Proteomes" id="UP000001964">
    <property type="component" value="Chromosome"/>
</dbReference>
<dbReference type="GO" id="GO:0005886">
    <property type="term" value="C:plasma membrane"/>
    <property type="evidence" value="ECO:0007669"/>
    <property type="project" value="UniProtKB-SubCell"/>
</dbReference>
<dbReference type="GO" id="GO:0051991">
    <property type="term" value="F:UDP-N-acetyl-D-glucosamine:N-acetylmuramoyl-L-alanyl-D-glutamyl-meso-2,6-diaminopimelyl-D-alanyl-D-alanine-diphosphoundecaprenol 4-beta-N-acetylglucosaminlytransferase activity"/>
    <property type="evidence" value="ECO:0007669"/>
    <property type="project" value="RHEA"/>
</dbReference>
<dbReference type="GO" id="GO:0050511">
    <property type="term" value="F:undecaprenyldiphospho-muramoylpentapeptide beta-N-acetylglucosaminyltransferase activity"/>
    <property type="evidence" value="ECO:0007669"/>
    <property type="project" value="UniProtKB-UniRule"/>
</dbReference>
<dbReference type="GO" id="GO:0005975">
    <property type="term" value="P:carbohydrate metabolic process"/>
    <property type="evidence" value="ECO:0007669"/>
    <property type="project" value="InterPro"/>
</dbReference>
<dbReference type="GO" id="GO:0051301">
    <property type="term" value="P:cell division"/>
    <property type="evidence" value="ECO:0007669"/>
    <property type="project" value="UniProtKB-KW"/>
</dbReference>
<dbReference type="GO" id="GO:0071555">
    <property type="term" value="P:cell wall organization"/>
    <property type="evidence" value="ECO:0007669"/>
    <property type="project" value="UniProtKB-KW"/>
</dbReference>
<dbReference type="GO" id="GO:0030259">
    <property type="term" value="P:lipid glycosylation"/>
    <property type="evidence" value="ECO:0007669"/>
    <property type="project" value="UniProtKB-UniRule"/>
</dbReference>
<dbReference type="GO" id="GO:0009252">
    <property type="term" value="P:peptidoglycan biosynthetic process"/>
    <property type="evidence" value="ECO:0007669"/>
    <property type="project" value="UniProtKB-UniRule"/>
</dbReference>
<dbReference type="GO" id="GO:0008360">
    <property type="term" value="P:regulation of cell shape"/>
    <property type="evidence" value="ECO:0007669"/>
    <property type="project" value="UniProtKB-KW"/>
</dbReference>
<dbReference type="CDD" id="cd03785">
    <property type="entry name" value="GT28_MurG"/>
    <property type="match status" value="1"/>
</dbReference>
<dbReference type="Gene3D" id="3.40.50.2000">
    <property type="entry name" value="Glycogen Phosphorylase B"/>
    <property type="match status" value="2"/>
</dbReference>
<dbReference type="HAMAP" id="MF_00033">
    <property type="entry name" value="MurG"/>
    <property type="match status" value="1"/>
</dbReference>
<dbReference type="InterPro" id="IPR006009">
    <property type="entry name" value="GlcNAc_MurG"/>
</dbReference>
<dbReference type="InterPro" id="IPR007235">
    <property type="entry name" value="Glyco_trans_28_C"/>
</dbReference>
<dbReference type="InterPro" id="IPR004276">
    <property type="entry name" value="GlycoTrans_28_N"/>
</dbReference>
<dbReference type="NCBIfam" id="TIGR01133">
    <property type="entry name" value="murG"/>
    <property type="match status" value="1"/>
</dbReference>
<dbReference type="PANTHER" id="PTHR21015:SF22">
    <property type="entry name" value="GLYCOSYLTRANSFERASE"/>
    <property type="match status" value="1"/>
</dbReference>
<dbReference type="PANTHER" id="PTHR21015">
    <property type="entry name" value="UDP-N-ACETYLGLUCOSAMINE--N-ACETYLMURAMYL-(PENTAPEPTIDE) PYROPHOSPHORYL-UNDECAPRENOL N-ACETYLGLUCOSAMINE TRANSFERASE 1"/>
    <property type="match status" value="1"/>
</dbReference>
<dbReference type="Pfam" id="PF04101">
    <property type="entry name" value="Glyco_tran_28_C"/>
    <property type="match status" value="1"/>
</dbReference>
<dbReference type="Pfam" id="PF03033">
    <property type="entry name" value="Glyco_transf_28"/>
    <property type="match status" value="1"/>
</dbReference>
<dbReference type="SUPFAM" id="SSF53756">
    <property type="entry name" value="UDP-Glycosyltransferase/glycogen phosphorylase"/>
    <property type="match status" value="1"/>
</dbReference>
<reference key="1">
    <citation type="submission" date="2006-08" db="EMBL/GenBank/DDBJ databases">
        <title>Complete sequence of Maricaulis maris MCS10.</title>
        <authorList>
            <consortium name="US DOE Joint Genome Institute"/>
            <person name="Copeland A."/>
            <person name="Lucas S."/>
            <person name="Lapidus A."/>
            <person name="Barry K."/>
            <person name="Detter J.C."/>
            <person name="Glavina del Rio T."/>
            <person name="Hammon N."/>
            <person name="Israni S."/>
            <person name="Dalin E."/>
            <person name="Tice H."/>
            <person name="Pitluck S."/>
            <person name="Saunders E."/>
            <person name="Brettin T."/>
            <person name="Bruce D."/>
            <person name="Han C."/>
            <person name="Tapia R."/>
            <person name="Gilna P."/>
            <person name="Schmutz J."/>
            <person name="Larimer F."/>
            <person name="Land M."/>
            <person name="Hauser L."/>
            <person name="Kyrpides N."/>
            <person name="Mikhailova N."/>
            <person name="Viollier P."/>
            <person name="Stephens C."/>
            <person name="Richardson P."/>
        </authorList>
    </citation>
    <scope>NUCLEOTIDE SEQUENCE [LARGE SCALE GENOMIC DNA]</scope>
    <source>
        <strain>MCS10</strain>
    </source>
</reference>
<gene>
    <name evidence="1" type="primary">murG</name>
    <name type="ordered locus">Mmar10_2078</name>
</gene>
<accession>Q0AMW7</accession>
<sequence length="368" mass="38460">MTPRRCLIAAGGTGGHMFPARAAAEALIARGWQVRLVTDARGLRHATDFPAVAVDEIHAASPSTKNPLKLARAALELTQGFAQARSIVGKWKPDVIAGFGGYPAFPALAVARSMGIAFAIHEQNAVLGRVNRVFAAKAGFVASGFERLDRLPAKAKKRHILTGNPLRAPILAARDAGYPAIDADGRLNILVLGGSLGARILSETVPQALAMVPEKLRSRLDVVQQTREESLPMARETYQAAGIAAQCEPFFEDVGSLYAASHLVIGRAGASTVSEVAGVGRPAIFCPLAIAADDHQSANVDGLVQAVACDVVHEGEFTAQKIAALIETRLSNPDDLASRAQSARALGRPDAADALARAVDGLVTGALV</sequence>
<protein>
    <recommendedName>
        <fullName evidence="1">UDP-N-acetylglucosamine--N-acetylmuramyl-(pentapeptide) pyrophosphoryl-undecaprenol N-acetylglucosamine transferase</fullName>
        <ecNumber evidence="1">2.4.1.227</ecNumber>
    </recommendedName>
    <alternativeName>
        <fullName evidence="1">Undecaprenyl-PP-MurNAc-pentapeptide-UDPGlcNAc GlcNAc transferase</fullName>
    </alternativeName>
</protein>
<comment type="function">
    <text evidence="1">Cell wall formation. Catalyzes the transfer of a GlcNAc subunit on undecaprenyl-pyrophosphoryl-MurNAc-pentapeptide (lipid intermediate I) to form undecaprenyl-pyrophosphoryl-MurNAc-(pentapeptide)GlcNAc (lipid intermediate II).</text>
</comment>
<comment type="catalytic activity">
    <reaction evidence="1">
        <text>di-trans,octa-cis-undecaprenyl diphospho-N-acetyl-alpha-D-muramoyl-L-alanyl-D-glutamyl-meso-2,6-diaminopimeloyl-D-alanyl-D-alanine + UDP-N-acetyl-alpha-D-glucosamine = di-trans,octa-cis-undecaprenyl diphospho-[N-acetyl-alpha-D-glucosaminyl-(1-&gt;4)]-N-acetyl-alpha-D-muramoyl-L-alanyl-D-glutamyl-meso-2,6-diaminopimeloyl-D-alanyl-D-alanine + UDP + H(+)</text>
        <dbReference type="Rhea" id="RHEA:31227"/>
        <dbReference type="ChEBI" id="CHEBI:15378"/>
        <dbReference type="ChEBI" id="CHEBI:57705"/>
        <dbReference type="ChEBI" id="CHEBI:58223"/>
        <dbReference type="ChEBI" id="CHEBI:61387"/>
        <dbReference type="ChEBI" id="CHEBI:61388"/>
        <dbReference type="EC" id="2.4.1.227"/>
    </reaction>
</comment>
<comment type="pathway">
    <text evidence="1">Cell wall biogenesis; peptidoglycan biosynthesis.</text>
</comment>
<comment type="subcellular location">
    <subcellularLocation>
        <location evidence="1">Cell inner membrane</location>
        <topology evidence="1">Peripheral membrane protein</topology>
        <orientation evidence="1">Cytoplasmic side</orientation>
    </subcellularLocation>
</comment>
<comment type="similarity">
    <text evidence="1">Belongs to the glycosyltransferase 28 family. MurG subfamily.</text>
</comment>
<feature type="chain" id="PRO_0000315114" description="UDP-N-acetylglucosamine--N-acetylmuramyl-(pentapeptide) pyrophosphoryl-undecaprenol N-acetylglucosamine transferase">
    <location>
        <begin position="1"/>
        <end position="368"/>
    </location>
</feature>
<feature type="binding site" evidence="1">
    <location>
        <begin position="13"/>
        <end position="15"/>
    </location>
    <ligand>
        <name>UDP-N-acetyl-alpha-D-glucosamine</name>
        <dbReference type="ChEBI" id="CHEBI:57705"/>
    </ligand>
</feature>
<feature type="binding site" evidence="1">
    <location>
        <position position="124"/>
    </location>
    <ligand>
        <name>UDP-N-acetyl-alpha-D-glucosamine</name>
        <dbReference type="ChEBI" id="CHEBI:57705"/>
    </ligand>
</feature>
<feature type="binding site" evidence="1">
    <location>
        <position position="167"/>
    </location>
    <ligand>
        <name>UDP-N-acetyl-alpha-D-glucosamine</name>
        <dbReference type="ChEBI" id="CHEBI:57705"/>
    </ligand>
</feature>
<feature type="binding site" evidence="1">
    <location>
        <position position="195"/>
    </location>
    <ligand>
        <name>UDP-N-acetyl-alpha-D-glucosamine</name>
        <dbReference type="ChEBI" id="CHEBI:57705"/>
    </ligand>
</feature>
<feature type="binding site" evidence="1">
    <location>
        <position position="296"/>
    </location>
    <ligand>
        <name>UDP-N-acetyl-alpha-D-glucosamine</name>
        <dbReference type="ChEBI" id="CHEBI:57705"/>
    </ligand>
</feature>
<proteinExistence type="inferred from homology"/>
<evidence type="ECO:0000255" key="1">
    <source>
        <dbReference type="HAMAP-Rule" id="MF_00033"/>
    </source>
</evidence>